<organism>
    <name type="scientific">Afipia carboxidovorans (strain ATCC 49405 / DSM 1227 / KCTC 32145 / OM5)</name>
    <name type="common">Oligotropha carboxidovorans</name>
    <dbReference type="NCBI Taxonomy" id="504832"/>
    <lineage>
        <taxon>Bacteria</taxon>
        <taxon>Pseudomonadati</taxon>
        <taxon>Pseudomonadota</taxon>
        <taxon>Alphaproteobacteria</taxon>
        <taxon>Hyphomicrobiales</taxon>
        <taxon>Nitrobacteraceae</taxon>
        <taxon>Afipia</taxon>
    </lineage>
</organism>
<gene>
    <name evidence="1" type="primary">rplI</name>
    <name type="ordered locus">OCAR_6374</name>
    <name type="ordered locus">OCA5_c16700</name>
</gene>
<comment type="function">
    <text evidence="1">Binds to the 23S rRNA.</text>
</comment>
<comment type="similarity">
    <text evidence="1">Belongs to the bacterial ribosomal protein bL9 family.</text>
</comment>
<evidence type="ECO:0000255" key="1">
    <source>
        <dbReference type="HAMAP-Rule" id="MF_00503"/>
    </source>
</evidence>
<evidence type="ECO:0000256" key="2">
    <source>
        <dbReference type="SAM" id="MobiDB-lite"/>
    </source>
</evidence>
<evidence type="ECO:0000305" key="3"/>
<sequence>MEVILLERVAKLGQMGDIVTVKNGYARNFLLKRHKALRATADNRAKYEGMKADLEAKNIAAKGEAAKVAEKIEGRNVVIIRQASEGGQLYGSVSVRDIMAALAADGVSLSRHQVLLEHPIKEIGQHKITIAVHPEVEIHVTATVARSEAEAERINRGEDINSRQEDQDAAAEAIAAAGEFFDPEAQDETPETEAASEQQ</sequence>
<dbReference type="EMBL" id="CP001196">
    <property type="protein sequence ID" value="ACI93487.1"/>
    <property type="molecule type" value="Genomic_DNA"/>
</dbReference>
<dbReference type="EMBL" id="CP002826">
    <property type="protein sequence ID" value="AEI06384.1"/>
    <property type="molecule type" value="Genomic_DNA"/>
</dbReference>
<dbReference type="RefSeq" id="WP_012563513.1">
    <property type="nucleotide sequence ID" value="NC_015684.1"/>
</dbReference>
<dbReference type="SMR" id="B6JGW6"/>
<dbReference type="STRING" id="504832.OCA5_c16700"/>
<dbReference type="KEGG" id="oca:OCAR_6374"/>
<dbReference type="KEGG" id="ocg:OCA5_c16700"/>
<dbReference type="PATRIC" id="fig|504832.7.peg.1782"/>
<dbReference type="eggNOG" id="COG0359">
    <property type="taxonomic scope" value="Bacteria"/>
</dbReference>
<dbReference type="HOGENOM" id="CLU_078938_1_0_5"/>
<dbReference type="OrthoDB" id="9788336at2"/>
<dbReference type="Proteomes" id="UP000007730">
    <property type="component" value="Chromosome"/>
</dbReference>
<dbReference type="GO" id="GO:1990904">
    <property type="term" value="C:ribonucleoprotein complex"/>
    <property type="evidence" value="ECO:0007669"/>
    <property type="project" value="UniProtKB-KW"/>
</dbReference>
<dbReference type="GO" id="GO:0005840">
    <property type="term" value="C:ribosome"/>
    <property type="evidence" value="ECO:0007669"/>
    <property type="project" value="UniProtKB-KW"/>
</dbReference>
<dbReference type="GO" id="GO:0019843">
    <property type="term" value="F:rRNA binding"/>
    <property type="evidence" value="ECO:0007669"/>
    <property type="project" value="UniProtKB-UniRule"/>
</dbReference>
<dbReference type="GO" id="GO:0003735">
    <property type="term" value="F:structural constituent of ribosome"/>
    <property type="evidence" value="ECO:0007669"/>
    <property type="project" value="InterPro"/>
</dbReference>
<dbReference type="GO" id="GO:0006412">
    <property type="term" value="P:translation"/>
    <property type="evidence" value="ECO:0007669"/>
    <property type="project" value="UniProtKB-UniRule"/>
</dbReference>
<dbReference type="Gene3D" id="3.10.430.100">
    <property type="entry name" value="Ribosomal protein L9, C-terminal domain"/>
    <property type="match status" value="1"/>
</dbReference>
<dbReference type="Gene3D" id="3.40.5.10">
    <property type="entry name" value="Ribosomal protein L9, N-terminal domain"/>
    <property type="match status" value="1"/>
</dbReference>
<dbReference type="HAMAP" id="MF_00503">
    <property type="entry name" value="Ribosomal_bL9"/>
    <property type="match status" value="1"/>
</dbReference>
<dbReference type="InterPro" id="IPR000244">
    <property type="entry name" value="Ribosomal_bL9"/>
</dbReference>
<dbReference type="InterPro" id="IPR009027">
    <property type="entry name" value="Ribosomal_bL9/RNase_H1_N"/>
</dbReference>
<dbReference type="InterPro" id="IPR020594">
    <property type="entry name" value="Ribosomal_bL9_bac/chp"/>
</dbReference>
<dbReference type="InterPro" id="IPR020069">
    <property type="entry name" value="Ribosomal_bL9_C"/>
</dbReference>
<dbReference type="InterPro" id="IPR036791">
    <property type="entry name" value="Ribosomal_bL9_C_sf"/>
</dbReference>
<dbReference type="InterPro" id="IPR020070">
    <property type="entry name" value="Ribosomal_bL9_N"/>
</dbReference>
<dbReference type="InterPro" id="IPR036935">
    <property type="entry name" value="Ribosomal_bL9_N_sf"/>
</dbReference>
<dbReference type="NCBIfam" id="TIGR00158">
    <property type="entry name" value="L9"/>
    <property type="match status" value="1"/>
</dbReference>
<dbReference type="PANTHER" id="PTHR21368">
    <property type="entry name" value="50S RIBOSOMAL PROTEIN L9"/>
    <property type="match status" value="1"/>
</dbReference>
<dbReference type="Pfam" id="PF03948">
    <property type="entry name" value="Ribosomal_L9_C"/>
    <property type="match status" value="1"/>
</dbReference>
<dbReference type="Pfam" id="PF01281">
    <property type="entry name" value="Ribosomal_L9_N"/>
    <property type="match status" value="1"/>
</dbReference>
<dbReference type="SUPFAM" id="SSF55658">
    <property type="entry name" value="L9 N-domain-like"/>
    <property type="match status" value="1"/>
</dbReference>
<dbReference type="SUPFAM" id="SSF55653">
    <property type="entry name" value="Ribosomal protein L9 C-domain"/>
    <property type="match status" value="1"/>
</dbReference>
<dbReference type="PROSITE" id="PS00651">
    <property type="entry name" value="RIBOSOMAL_L9"/>
    <property type="match status" value="1"/>
</dbReference>
<accession>B6JGW6</accession>
<accession>F8C0K8</accession>
<protein>
    <recommendedName>
        <fullName evidence="1">Large ribosomal subunit protein bL9</fullName>
    </recommendedName>
    <alternativeName>
        <fullName evidence="3">50S ribosomal protein L9</fullName>
    </alternativeName>
</protein>
<name>RL9_AFIC5</name>
<keyword id="KW-1185">Reference proteome</keyword>
<keyword id="KW-0687">Ribonucleoprotein</keyword>
<keyword id="KW-0689">Ribosomal protein</keyword>
<keyword id="KW-0694">RNA-binding</keyword>
<keyword id="KW-0699">rRNA-binding</keyword>
<feature type="chain" id="PRO_1000126947" description="Large ribosomal subunit protein bL9">
    <location>
        <begin position="1"/>
        <end position="199"/>
    </location>
</feature>
<feature type="region of interest" description="Disordered" evidence="2">
    <location>
        <begin position="149"/>
        <end position="199"/>
    </location>
</feature>
<feature type="compositionally biased region" description="Basic and acidic residues" evidence="2">
    <location>
        <begin position="149"/>
        <end position="166"/>
    </location>
</feature>
<feature type="compositionally biased region" description="Acidic residues" evidence="2">
    <location>
        <begin position="181"/>
        <end position="191"/>
    </location>
</feature>
<reference key="1">
    <citation type="journal article" date="2008" name="J. Bacteriol.">
        <title>Genome sequence of the chemolithoautotrophic bacterium Oligotropha carboxidovorans OM5T.</title>
        <authorList>
            <person name="Paul D."/>
            <person name="Bridges S."/>
            <person name="Burgess S.C."/>
            <person name="Dandass Y."/>
            <person name="Lawrence M.L."/>
        </authorList>
    </citation>
    <scope>NUCLEOTIDE SEQUENCE [LARGE SCALE GENOMIC DNA]</scope>
    <source>
        <strain>ATCC 49405 / DSM 1227 / KCTC 32145 / OM5</strain>
    </source>
</reference>
<reference key="2">
    <citation type="journal article" date="2011" name="J. Bacteriol.">
        <title>Complete genome sequences of the chemolithoautotrophic Oligotropha carboxidovorans strains OM4 and OM5.</title>
        <authorList>
            <person name="Volland S."/>
            <person name="Rachinger M."/>
            <person name="Strittmatter A."/>
            <person name="Daniel R."/>
            <person name="Gottschalk G."/>
            <person name="Meyer O."/>
        </authorList>
    </citation>
    <scope>NUCLEOTIDE SEQUENCE [LARGE SCALE GENOMIC DNA]</scope>
    <source>
        <strain>ATCC 49405 / DSM 1227 / KCTC 32145 / OM5</strain>
    </source>
</reference>
<proteinExistence type="inferred from homology"/>